<sequence length="238" mass="27999">MWASGSVKIPTHIAVIPDGNRRYAKKTGIDFYHAYKKGVEKVRNFLTWALEFRDIKNVTFFALSTENLQRSKIELEILFRIFEDELRRTLEDPLIHDNKVRVRFIGDRSLLPGKVVKYIDELESVTKNYSNYHLTIALGYGGRAEIVRCIKRVLSGEVRLETFSEEELFQCLDTRGIPNPEPDVVVRTGGEKRLSNFLLYQTAYSELIFLEKLWPEVEREDLVYIIEEYSRRQRRFGR</sequence>
<keyword id="KW-0460">Magnesium</keyword>
<keyword id="KW-0479">Metal-binding</keyword>
<keyword id="KW-1185">Reference proteome</keyword>
<keyword id="KW-0808">Transferase</keyword>
<gene>
    <name evidence="1" type="primary">uppS</name>
    <name type="ordered locus">PAE2942</name>
</gene>
<organism>
    <name type="scientific">Pyrobaculum aerophilum (strain ATCC 51768 / DSM 7523 / JCM 9630 / CIP 104966 / NBRC 100827 / IM2)</name>
    <dbReference type="NCBI Taxonomy" id="178306"/>
    <lineage>
        <taxon>Archaea</taxon>
        <taxon>Thermoproteota</taxon>
        <taxon>Thermoprotei</taxon>
        <taxon>Thermoproteales</taxon>
        <taxon>Thermoproteaceae</taxon>
        <taxon>Pyrobaculum</taxon>
    </lineage>
</organism>
<evidence type="ECO:0000255" key="1">
    <source>
        <dbReference type="HAMAP-Rule" id="MF_01139"/>
    </source>
</evidence>
<protein>
    <recommendedName>
        <fullName evidence="1">Tritrans,polycis-undecaprenyl-diphosphate synthase (geranylgeranyl-diphosphate specific)</fullName>
        <ecNumber evidence="1">2.5.1.89</ecNumber>
    </recommendedName>
    <alternativeName>
        <fullName evidence="1">Undecaprenyl diphosphate synthase</fullName>
        <shortName evidence="1">UDS</shortName>
    </alternativeName>
    <alternativeName>
        <fullName evidence="1">Undecaprenyl pyrophosphate synthase</fullName>
        <shortName evidence="1">UPP synthase</shortName>
    </alternativeName>
</protein>
<comment type="function">
    <text evidence="1">Catalyzes the sequential condensation of isopentenyl diphosphate (IPP) with geranylgeranyl diphosphate (GGPP) to yield (2Z,6Z,10Z,14Z,18Z,22Z,26Z,30E,34E,38E)-undecaprenyl diphosphate (tritrans,heptacis-UPP). It is probably the precursor of glycosyl carrier lipids.</text>
</comment>
<comment type="catalytic activity">
    <reaction evidence="1">
        <text>geranylgeranyl diphosphate + 7 isopentenyl diphosphate = tri-trans,hepta-cis-undecaprenyl diphosphate + 7 diphosphate</text>
        <dbReference type="Rhea" id="RHEA:27622"/>
        <dbReference type="ChEBI" id="CHEBI:33019"/>
        <dbReference type="ChEBI" id="CHEBI:57533"/>
        <dbReference type="ChEBI" id="CHEBI:60388"/>
        <dbReference type="ChEBI" id="CHEBI:128769"/>
        <dbReference type="EC" id="2.5.1.89"/>
    </reaction>
</comment>
<comment type="cofactor">
    <cofactor evidence="1">
        <name>Mg(2+)</name>
        <dbReference type="ChEBI" id="CHEBI:18420"/>
    </cofactor>
    <text evidence="1">Binds 2 magnesium ions per subunit.</text>
</comment>
<comment type="subunit">
    <text evidence="1">Homodimer.</text>
</comment>
<comment type="similarity">
    <text evidence="1">Belongs to the UPP synthase family.</text>
</comment>
<reference key="1">
    <citation type="journal article" date="2002" name="Proc. Natl. Acad. Sci. U.S.A.">
        <title>Genome sequence of the hyperthermophilic crenarchaeon Pyrobaculum aerophilum.</title>
        <authorList>
            <person name="Fitz-Gibbon S.T."/>
            <person name="Ladner H."/>
            <person name="Kim U.-J."/>
            <person name="Stetter K.O."/>
            <person name="Simon M.I."/>
            <person name="Miller J.H."/>
        </authorList>
    </citation>
    <scope>NUCLEOTIDE SEQUENCE [LARGE SCALE GENOMIC DNA]</scope>
    <source>
        <strain>ATCC 51768 / DSM 7523 / JCM 9630 / CIP 104966 / NBRC 100827 / IM2</strain>
    </source>
</reference>
<proteinExistence type="inferred from homology"/>
<dbReference type="EC" id="2.5.1.89" evidence="1"/>
<dbReference type="EMBL" id="AE009441">
    <property type="protein sequence ID" value="AAL64554.1"/>
    <property type="molecule type" value="Genomic_DNA"/>
</dbReference>
<dbReference type="RefSeq" id="WP_011009022.1">
    <property type="nucleotide sequence ID" value="NC_003364.1"/>
</dbReference>
<dbReference type="SMR" id="Q8ZU54"/>
<dbReference type="FunCoup" id="Q8ZU54">
    <property type="interactions" value="131"/>
</dbReference>
<dbReference type="STRING" id="178306.PAE2942"/>
<dbReference type="EnsemblBacteria" id="AAL64554">
    <property type="protein sequence ID" value="AAL64554"/>
    <property type="gene ID" value="PAE2942"/>
</dbReference>
<dbReference type="GeneID" id="1463718"/>
<dbReference type="KEGG" id="pai:PAE2942"/>
<dbReference type="PATRIC" id="fig|178306.9.peg.2203"/>
<dbReference type="eggNOG" id="arCOG01532">
    <property type="taxonomic scope" value="Archaea"/>
</dbReference>
<dbReference type="HOGENOM" id="CLU_038505_2_0_2"/>
<dbReference type="InParanoid" id="Q8ZU54"/>
<dbReference type="Proteomes" id="UP000002439">
    <property type="component" value="Chromosome"/>
</dbReference>
<dbReference type="GO" id="GO:0000287">
    <property type="term" value="F:magnesium ion binding"/>
    <property type="evidence" value="ECO:0007669"/>
    <property type="project" value="UniProtKB-UniRule"/>
</dbReference>
<dbReference type="GO" id="GO:0004659">
    <property type="term" value="F:prenyltransferase activity"/>
    <property type="evidence" value="ECO:0007669"/>
    <property type="project" value="UniProtKB-UniRule"/>
</dbReference>
<dbReference type="GO" id="GO:0016094">
    <property type="term" value="P:polyprenol biosynthetic process"/>
    <property type="evidence" value="ECO:0000318"/>
    <property type="project" value="GO_Central"/>
</dbReference>
<dbReference type="CDD" id="cd00475">
    <property type="entry name" value="Cis_IPPS"/>
    <property type="match status" value="1"/>
</dbReference>
<dbReference type="FunFam" id="3.40.1180.10:FF:000005">
    <property type="entry name" value="Alkyl transferase"/>
    <property type="match status" value="1"/>
</dbReference>
<dbReference type="Gene3D" id="3.40.1180.10">
    <property type="entry name" value="Decaprenyl diphosphate synthase-like"/>
    <property type="match status" value="1"/>
</dbReference>
<dbReference type="HAMAP" id="MF_01139">
    <property type="entry name" value="ISPT"/>
    <property type="match status" value="1"/>
</dbReference>
<dbReference type="InterPro" id="IPR001441">
    <property type="entry name" value="UPP_synth-like"/>
</dbReference>
<dbReference type="InterPro" id="IPR018520">
    <property type="entry name" value="UPP_synth-like_CS"/>
</dbReference>
<dbReference type="InterPro" id="IPR036424">
    <property type="entry name" value="UPP_synth-like_sf"/>
</dbReference>
<dbReference type="NCBIfam" id="TIGR00055">
    <property type="entry name" value="uppS"/>
    <property type="match status" value="1"/>
</dbReference>
<dbReference type="PANTHER" id="PTHR10291:SF43">
    <property type="entry name" value="DEHYDRODOLICHYL DIPHOSPHATE SYNTHASE COMPLEX SUBUNIT DHDDS"/>
    <property type="match status" value="1"/>
</dbReference>
<dbReference type="PANTHER" id="PTHR10291">
    <property type="entry name" value="DEHYDRODOLICHYL DIPHOSPHATE SYNTHASE FAMILY MEMBER"/>
    <property type="match status" value="1"/>
</dbReference>
<dbReference type="Pfam" id="PF01255">
    <property type="entry name" value="Prenyltransf"/>
    <property type="match status" value="1"/>
</dbReference>
<dbReference type="SUPFAM" id="SSF64005">
    <property type="entry name" value="Undecaprenyl diphosphate synthase"/>
    <property type="match status" value="1"/>
</dbReference>
<dbReference type="PROSITE" id="PS01066">
    <property type="entry name" value="UPP_SYNTHASE"/>
    <property type="match status" value="1"/>
</dbReference>
<name>UPPS_PYRAE</name>
<feature type="chain" id="PRO_0000123737" description="Tritrans,polycis-undecaprenyl-diphosphate synthase (geranylgeranyl-diphosphate specific)">
    <location>
        <begin position="1"/>
        <end position="238"/>
    </location>
</feature>
<feature type="active site" evidence="1">
    <location>
        <position position="18"/>
    </location>
</feature>
<feature type="active site" description="Proton acceptor" evidence="1">
    <location>
        <position position="67"/>
    </location>
</feature>
<feature type="binding site" evidence="1">
    <location>
        <position position="18"/>
    </location>
    <ligand>
        <name>Mg(2+)</name>
        <dbReference type="ChEBI" id="CHEBI:18420"/>
    </ligand>
</feature>
<feature type="binding site" evidence="1">
    <location>
        <begin position="19"/>
        <end position="22"/>
    </location>
    <ligand>
        <name>substrate</name>
    </ligand>
</feature>
<feature type="binding site" evidence="1">
    <location>
        <begin position="64"/>
        <end position="66"/>
    </location>
    <ligand>
        <name>substrate</name>
    </ligand>
</feature>
<feature type="binding site" evidence="1">
    <location>
        <position position="70"/>
    </location>
    <ligand>
        <name>substrate</name>
    </ligand>
</feature>
<feature type="binding site" evidence="1">
    <location>
        <position position="187"/>
    </location>
    <ligand>
        <name>substrate</name>
    </ligand>
</feature>
<feature type="binding site" evidence="1">
    <location>
        <begin position="193"/>
        <end position="195"/>
    </location>
    <ligand>
        <name>substrate</name>
    </ligand>
</feature>
<feature type="binding site" evidence="1">
    <location>
        <position position="206"/>
    </location>
    <ligand>
        <name>Mg(2+)</name>
        <dbReference type="ChEBI" id="CHEBI:18420"/>
    </ligand>
</feature>
<accession>Q8ZU54</accession>